<reference key="1">
    <citation type="submission" date="2004-11" db="EMBL/GenBank/DDBJ databases">
        <authorList>
            <consortium name="The German cDNA consortium"/>
        </authorList>
    </citation>
    <scope>NUCLEOTIDE SEQUENCE [LARGE SCALE MRNA]</scope>
    <source>
        <tissue>Brain cortex</tissue>
    </source>
</reference>
<gene>
    <name type="primary">FAM110B</name>
</gene>
<comment type="subcellular location">
    <subcellularLocation>
        <location>Cytoplasm</location>
    </subcellularLocation>
    <subcellularLocation>
        <location evidence="1">Cytoplasm</location>
        <location evidence="1">Cytoskeleton</location>
        <location evidence="1">Microtubule organizing center</location>
        <location evidence="1">Centrosome</location>
    </subcellularLocation>
</comment>
<comment type="similarity">
    <text evidence="5">Belongs to the FAM110 family.</text>
</comment>
<proteinExistence type="evidence at transcript level"/>
<keyword id="KW-0963">Cytoplasm</keyword>
<keyword id="KW-0206">Cytoskeleton</keyword>
<keyword id="KW-0597">Phosphoprotein</keyword>
<keyword id="KW-1185">Reference proteome</keyword>
<name>F110B_PONAB</name>
<feature type="chain" id="PRO_0000285653" description="Protein FAM110B">
    <location>
        <begin position="1"/>
        <end position="370"/>
    </location>
</feature>
<feature type="region of interest" description="Disordered" evidence="4">
    <location>
        <begin position="127"/>
        <end position="151"/>
    </location>
</feature>
<feature type="region of interest" description="Disordered" evidence="4">
    <location>
        <begin position="237"/>
        <end position="256"/>
    </location>
</feature>
<feature type="region of interest" description="Disordered" evidence="4">
    <location>
        <begin position="317"/>
        <end position="337"/>
    </location>
</feature>
<feature type="compositionally biased region" description="Basic and acidic residues" evidence="4">
    <location>
        <begin position="326"/>
        <end position="335"/>
    </location>
</feature>
<feature type="modified residue" description="Phosphoserine" evidence="2">
    <location>
        <position position="238"/>
    </location>
</feature>
<feature type="modified residue" description="Phosphoserine" evidence="3">
    <location>
        <position position="301"/>
    </location>
</feature>
<organism>
    <name type="scientific">Pongo abelii</name>
    <name type="common">Sumatran orangutan</name>
    <name type="synonym">Pongo pygmaeus abelii</name>
    <dbReference type="NCBI Taxonomy" id="9601"/>
    <lineage>
        <taxon>Eukaryota</taxon>
        <taxon>Metazoa</taxon>
        <taxon>Chordata</taxon>
        <taxon>Craniata</taxon>
        <taxon>Vertebrata</taxon>
        <taxon>Euteleostomi</taxon>
        <taxon>Mammalia</taxon>
        <taxon>Eutheria</taxon>
        <taxon>Euarchontoglires</taxon>
        <taxon>Primates</taxon>
        <taxon>Haplorrhini</taxon>
        <taxon>Catarrhini</taxon>
        <taxon>Hominidae</taxon>
        <taxon>Pongo</taxon>
    </lineage>
</organism>
<accession>Q5R5R3</accession>
<protein>
    <recommendedName>
        <fullName>Protein FAM110B</fullName>
    </recommendedName>
</protein>
<evidence type="ECO:0000250" key="1"/>
<evidence type="ECO:0000250" key="2">
    <source>
        <dbReference type="UniProtKB" id="Q8C739"/>
    </source>
</evidence>
<evidence type="ECO:0000250" key="3">
    <source>
        <dbReference type="UniProtKB" id="Q8TC76"/>
    </source>
</evidence>
<evidence type="ECO:0000256" key="4">
    <source>
        <dbReference type="SAM" id="MobiDB-lite"/>
    </source>
</evidence>
<evidence type="ECO:0000305" key="5"/>
<sequence length="370" mass="40659">MPTETLQTGSMVKPVSPAGTFTSAVPLRILNKGPDYFRRQAEPNPKRLSAVERLEADKAKYVKSQEVINAKQEPVKPAVLAKPPVCPAAKRALGSPTLKVFGNHAKTESGVQRENLKLEILKNIINSSEGSSSGSGHKHSSRNWPPHRSEATDLHRHSFAESLKVYPTQGRSSPQEGGSHVGRRLLEQSAESFLHVSHSSSDIRKVTSVKPLKAIPCSSSAPPLPPKPKIAAIASMKSPEADPVEPACGVSRRPSLQRSKSDLSDRYFRVDADVERFFNYCGLDPEELENLGMENFARANSDIISLNFRSASMISSDCEQSQDSNSDLRNDDSANDRVPYGISAIERNARIIKWLYSIKQARESQKVSHV</sequence>
<dbReference type="EMBL" id="CR860793">
    <property type="protein sequence ID" value="CAH92903.1"/>
    <property type="molecule type" value="mRNA"/>
</dbReference>
<dbReference type="RefSeq" id="NP_001126705.1">
    <property type="nucleotide sequence ID" value="NM_001133233.1"/>
</dbReference>
<dbReference type="FunCoup" id="Q5R5R3">
    <property type="interactions" value="1334"/>
</dbReference>
<dbReference type="STRING" id="9601.ENSPPYP00000020867"/>
<dbReference type="GeneID" id="100173705"/>
<dbReference type="KEGG" id="pon:100173705"/>
<dbReference type="CTD" id="90362"/>
<dbReference type="eggNOG" id="ENOG502R37V">
    <property type="taxonomic scope" value="Eukaryota"/>
</dbReference>
<dbReference type="HOGENOM" id="CLU_050540_0_0_1"/>
<dbReference type="InParanoid" id="Q5R5R3"/>
<dbReference type="OrthoDB" id="10028183at2759"/>
<dbReference type="TreeFam" id="TF330964"/>
<dbReference type="Proteomes" id="UP000001595">
    <property type="component" value="Chromosome 8"/>
</dbReference>
<dbReference type="GO" id="GO:0005813">
    <property type="term" value="C:centrosome"/>
    <property type="evidence" value="ECO:0007669"/>
    <property type="project" value="UniProtKB-SubCell"/>
</dbReference>
<dbReference type="GO" id="GO:0005737">
    <property type="term" value="C:cytoplasm"/>
    <property type="evidence" value="ECO:0007669"/>
    <property type="project" value="UniProtKB-SubCell"/>
</dbReference>
<dbReference type="InterPro" id="IPR025740">
    <property type="entry name" value="FAM110"/>
</dbReference>
<dbReference type="InterPro" id="IPR025741">
    <property type="entry name" value="FAM110_C"/>
</dbReference>
<dbReference type="InterPro" id="IPR025739">
    <property type="entry name" value="FAM110_N"/>
</dbReference>
<dbReference type="PANTHER" id="PTHR14758">
    <property type="entry name" value="AGAP005440-PA"/>
    <property type="match status" value="1"/>
</dbReference>
<dbReference type="PANTHER" id="PTHR14758:SF2">
    <property type="entry name" value="PROTEIN FAM110B"/>
    <property type="match status" value="1"/>
</dbReference>
<dbReference type="Pfam" id="PF14160">
    <property type="entry name" value="FAM110_C"/>
    <property type="match status" value="1"/>
</dbReference>
<dbReference type="Pfam" id="PF14161">
    <property type="entry name" value="FAM110_N"/>
    <property type="match status" value="1"/>
</dbReference>